<reference key="1">
    <citation type="journal article" date="2005" name="Proc. Natl. Acad. Sci. U.S.A.">
        <title>Complete genome sequence of Vibrio fischeri: a symbiotic bacterium with pathogenic congeners.</title>
        <authorList>
            <person name="Ruby E.G."/>
            <person name="Urbanowski M."/>
            <person name="Campbell J."/>
            <person name="Dunn A."/>
            <person name="Faini M."/>
            <person name="Gunsalus R."/>
            <person name="Lostroh P."/>
            <person name="Lupp C."/>
            <person name="McCann J."/>
            <person name="Millikan D."/>
            <person name="Schaefer A."/>
            <person name="Stabb E."/>
            <person name="Stevens A."/>
            <person name="Visick K."/>
            <person name="Whistler C."/>
            <person name="Greenberg E.P."/>
        </authorList>
    </citation>
    <scope>NUCLEOTIDE SEQUENCE [LARGE SCALE GENOMIC DNA]</scope>
    <source>
        <strain>ATCC 700601 / ES114</strain>
    </source>
</reference>
<gene>
    <name evidence="1" type="primary">dnaJ</name>
    <name type="ordered locus">VF_1993</name>
</gene>
<feature type="chain" id="PRO_0000070928" description="Chaperone protein DnaJ">
    <location>
        <begin position="1"/>
        <end position="379"/>
    </location>
</feature>
<feature type="domain" description="J" evidence="1">
    <location>
        <begin position="5"/>
        <end position="70"/>
    </location>
</feature>
<feature type="repeat" description="CXXCXGXG motif">
    <location>
        <begin position="147"/>
        <end position="154"/>
    </location>
</feature>
<feature type="repeat" description="CXXCXGXG motif">
    <location>
        <begin position="164"/>
        <end position="171"/>
    </location>
</feature>
<feature type="repeat" description="CXXCXGXG motif">
    <location>
        <begin position="186"/>
        <end position="193"/>
    </location>
</feature>
<feature type="repeat" description="CXXCXGXG motif">
    <location>
        <begin position="200"/>
        <end position="207"/>
    </location>
</feature>
<feature type="zinc finger region" description="CR-type" evidence="1">
    <location>
        <begin position="134"/>
        <end position="212"/>
    </location>
</feature>
<feature type="binding site" evidence="1">
    <location>
        <position position="147"/>
    </location>
    <ligand>
        <name>Zn(2+)</name>
        <dbReference type="ChEBI" id="CHEBI:29105"/>
        <label>1</label>
    </ligand>
</feature>
<feature type="binding site" evidence="1">
    <location>
        <position position="150"/>
    </location>
    <ligand>
        <name>Zn(2+)</name>
        <dbReference type="ChEBI" id="CHEBI:29105"/>
        <label>1</label>
    </ligand>
</feature>
<feature type="binding site" evidence="1">
    <location>
        <position position="164"/>
    </location>
    <ligand>
        <name>Zn(2+)</name>
        <dbReference type="ChEBI" id="CHEBI:29105"/>
        <label>2</label>
    </ligand>
</feature>
<feature type="binding site" evidence="1">
    <location>
        <position position="167"/>
    </location>
    <ligand>
        <name>Zn(2+)</name>
        <dbReference type="ChEBI" id="CHEBI:29105"/>
        <label>2</label>
    </ligand>
</feature>
<feature type="binding site" evidence="1">
    <location>
        <position position="186"/>
    </location>
    <ligand>
        <name>Zn(2+)</name>
        <dbReference type="ChEBI" id="CHEBI:29105"/>
        <label>2</label>
    </ligand>
</feature>
<feature type="binding site" evidence="1">
    <location>
        <position position="189"/>
    </location>
    <ligand>
        <name>Zn(2+)</name>
        <dbReference type="ChEBI" id="CHEBI:29105"/>
        <label>2</label>
    </ligand>
</feature>
<feature type="binding site" evidence="1">
    <location>
        <position position="200"/>
    </location>
    <ligand>
        <name>Zn(2+)</name>
        <dbReference type="ChEBI" id="CHEBI:29105"/>
        <label>1</label>
    </ligand>
</feature>
<feature type="binding site" evidence="1">
    <location>
        <position position="203"/>
    </location>
    <ligand>
        <name>Zn(2+)</name>
        <dbReference type="ChEBI" id="CHEBI:29105"/>
        <label>1</label>
    </ligand>
</feature>
<proteinExistence type="inferred from homology"/>
<name>DNAJ_ALIF1</name>
<dbReference type="EMBL" id="CP000020">
    <property type="protein sequence ID" value="AAW86488.1"/>
    <property type="molecule type" value="Genomic_DNA"/>
</dbReference>
<dbReference type="RefSeq" id="WP_011262455.1">
    <property type="nucleotide sequence ID" value="NC_006840.2"/>
</dbReference>
<dbReference type="RefSeq" id="YP_205376.1">
    <property type="nucleotide sequence ID" value="NC_006840.2"/>
</dbReference>
<dbReference type="SMR" id="Q5E3A8"/>
<dbReference type="STRING" id="312309.VF_1993"/>
<dbReference type="EnsemblBacteria" id="AAW86488">
    <property type="protein sequence ID" value="AAW86488"/>
    <property type="gene ID" value="VF_1993"/>
</dbReference>
<dbReference type="GeneID" id="54164689"/>
<dbReference type="KEGG" id="vfi:VF_1993"/>
<dbReference type="PATRIC" id="fig|312309.11.peg.2020"/>
<dbReference type="eggNOG" id="COG0484">
    <property type="taxonomic scope" value="Bacteria"/>
</dbReference>
<dbReference type="HOGENOM" id="CLU_017633_0_7_6"/>
<dbReference type="OrthoDB" id="9779889at2"/>
<dbReference type="Proteomes" id="UP000000537">
    <property type="component" value="Chromosome I"/>
</dbReference>
<dbReference type="GO" id="GO:0005737">
    <property type="term" value="C:cytoplasm"/>
    <property type="evidence" value="ECO:0007669"/>
    <property type="project" value="UniProtKB-SubCell"/>
</dbReference>
<dbReference type="GO" id="GO:0005524">
    <property type="term" value="F:ATP binding"/>
    <property type="evidence" value="ECO:0007669"/>
    <property type="project" value="InterPro"/>
</dbReference>
<dbReference type="GO" id="GO:0031072">
    <property type="term" value="F:heat shock protein binding"/>
    <property type="evidence" value="ECO:0007669"/>
    <property type="project" value="InterPro"/>
</dbReference>
<dbReference type="GO" id="GO:0051082">
    <property type="term" value="F:unfolded protein binding"/>
    <property type="evidence" value="ECO:0007669"/>
    <property type="project" value="UniProtKB-UniRule"/>
</dbReference>
<dbReference type="GO" id="GO:0008270">
    <property type="term" value="F:zinc ion binding"/>
    <property type="evidence" value="ECO:0007669"/>
    <property type="project" value="UniProtKB-UniRule"/>
</dbReference>
<dbReference type="GO" id="GO:0051085">
    <property type="term" value="P:chaperone cofactor-dependent protein refolding"/>
    <property type="evidence" value="ECO:0007669"/>
    <property type="project" value="TreeGrafter"/>
</dbReference>
<dbReference type="GO" id="GO:0006260">
    <property type="term" value="P:DNA replication"/>
    <property type="evidence" value="ECO:0007669"/>
    <property type="project" value="UniProtKB-KW"/>
</dbReference>
<dbReference type="GO" id="GO:0042026">
    <property type="term" value="P:protein refolding"/>
    <property type="evidence" value="ECO:0007669"/>
    <property type="project" value="TreeGrafter"/>
</dbReference>
<dbReference type="GO" id="GO:0009408">
    <property type="term" value="P:response to heat"/>
    <property type="evidence" value="ECO:0007669"/>
    <property type="project" value="InterPro"/>
</dbReference>
<dbReference type="CDD" id="cd06257">
    <property type="entry name" value="DnaJ"/>
    <property type="match status" value="1"/>
</dbReference>
<dbReference type="CDD" id="cd10747">
    <property type="entry name" value="DnaJ_C"/>
    <property type="match status" value="1"/>
</dbReference>
<dbReference type="CDD" id="cd10719">
    <property type="entry name" value="DnaJ_zf"/>
    <property type="match status" value="1"/>
</dbReference>
<dbReference type="FunFam" id="1.10.287.110:FF:000003">
    <property type="entry name" value="Molecular chaperone DnaJ"/>
    <property type="match status" value="1"/>
</dbReference>
<dbReference type="FunFam" id="2.10.230.10:FF:000002">
    <property type="entry name" value="Molecular chaperone DnaJ"/>
    <property type="match status" value="1"/>
</dbReference>
<dbReference type="FunFam" id="2.60.260.20:FF:000004">
    <property type="entry name" value="Molecular chaperone DnaJ"/>
    <property type="match status" value="1"/>
</dbReference>
<dbReference type="Gene3D" id="1.10.287.110">
    <property type="entry name" value="DnaJ domain"/>
    <property type="match status" value="1"/>
</dbReference>
<dbReference type="Gene3D" id="2.10.230.10">
    <property type="entry name" value="Heat shock protein DnaJ, cysteine-rich domain"/>
    <property type="match status" value="1"/>
</dbReference>
<dbReference type="Gene3D" id="2.60.260.20">
    <property type="entry name" value="Urease metallochaperone UreE, N-terminal domain"/>
    <property type="match status" value="2"/>
</dbReference>
<dbReference type="HAMAP" id="MF_01152">
    <property type="entry name" value="DnaJ"/>
    <property type="match status" value="1"/>
</dbReference>
<dbReference type="InterPro" id="IPR012724">
    <property type="entry name" value="DnaJ"/>
</dbReference>
<dbReference type="InterPro" id="IPR002939">
    <property type="entry name" value="DnaJ_C"/>
</dbReference>
<dbReference type="InterPro" id="IPR001623">
    <property type="entry name" value="DnaJ_domain"/>
</dbReference>
<dbReference type="InterPro" id="IPR018253">
    <property type="entry name" value="DnaJ_domain_CS"/>
</dbReference>
<dbReference type="InterPro" id="IPR008971">
    <property type="entry name" value="HSP40/DnaJ_pept-bd"/>
</dbReference>
<dbReference type="InterPro" id="IPR001305">
    <property type="entry name" value="HSP_DnaJ_Cys-rich_dom"/>
</dbReference>
<dbReference type="InterPro" id="IPR036410">
    <property type="entry name" value="HSP_DnaJ_Cys-rich_dom_sf"/>
</dbReference>
<dbReference type="InterPro" id="IPR036869">
    <property type="entry name" value="J_dom_sf"/>
</dbReference>
<dbReference type="NCBIfam" id="TIGR02349">
    <property type="entry name" value="DnaJ_bact"/>
    <property type="match status" value="1"/>
</dbReference>
<dbReference type="NCBIfam" id="NF008035">
    <property type="entry name" value="PRK10767.1"/>
    <property type="match status" value="1"/>
</dbReference>
<dbReference type="PANTHER" id="PTHR43096:SF48">
    <property type="entry name" value="CHAPERONE PROTEIN DNAJ"/>
    <property type="match status" value="1"/>
</dbReference>
<dbReference type="PANTHER" id="PTHR43096">
    <property type="entry name" value="DNAJ HOMOLOG 1, MITOCHONDRIAL-RELATED"/>
    <property type="match status" value="1"/>
</dbReference>
<dbReference type="Pfam" id="PF00226">
    <property type="entry name" value="DnaJ"/>
    <property type="match status" value="1"/>
</dbReference>
<dbReference type="Pfam" id="PF01556">
    <property type="entry name" value="DnaJ_C"/>
    <property type="match status" value="1"/>
</dbReference>
<dbReference type="Pfam" id="PF00684">
    <property type="entry name" value="DnaJ_CXXCXGXG"/>
    <property type="match status" value="1"/>
</dbReference>
<dbReference type="PRINTS" id="PR00625">
    <property type="entry name" value="JDOMAIN"/>
</dbReference>
<dbReference type="SMART" id="SM00271">
    <property type="entry name" value="DnaJ"/>
    <property type="match status" value="1"/>
</dbReference>
<dbReference type="SUPFAM" id="SSF46565">
    <property type="entry name" value="Chaperone J-domain"/>
    <property type="match status" value="1"/>
</dbReference>
<dbReference type="SUPFAM" id="SSF57938">
    <property type="entry name" value="DnaJ/Hsp40 cysteine-rich domain"/>
    <property type="match status" value="1"/>
</dbReference>
<dbReference type="SUPFAM" id="SSF49493">
    <property type="entry name" value="HSP40/DnaJ peptide-binding domain"/>
    <property type="match status" value="2"/>
</dbReference>
<dbReference type="PROSITE" id="PS00636">
    <property type="entry name" value="DNAJ_1"/>
    <property type="match status" value="1"/>
</dbReference>
<dbReference type="PROSITE" id="PS50076">
    <property type="entry name" value="DNAJ_2"/>
    <property type="match status" value="1"/>
</dbReference>
<dbReference type="PROSITE" id="PS51188">
    <property type="entry name" value="ZF_CR"/>
    <property type="match status" value="1"/>
</dbReference>
<accession>Q5E3A8</accession>
<comment type="function">
    <text evidence="1">Participates actively in the response to hyperosmotic and heat shock by preventing the aggregation of stress-denatured proteins and by disaggregating proteins, also in an autonomous, DnaK-independent fashion. Unfolded proteins bind initially to DnaJ; upon interaction with the DnaJ-bound protein, DnaK hydrolyzes its bound ATP, resulting in the formation of a stable complex. GrpE releases ADP from DnaK; ATP binding to DnaK triggers the release of the substrate protein, thus completing the reaction cycle. Several rounds of ATP-dependent interactions between DnaJ, DnaK and GrpE are required for fully efficient folding. Also involved, together with DnaK and GrpE, in the DNA replication of plasmids through activation of initiation proteins.</text>
</comment>
<comment type="cofactor">
    <cofactor evidence="1">
        <name>Zn(2+)</name>
        <dbReference type="ChEBI" id="CHEBI:29105"/>
    </cofactor>
    <text evidence="1">Binds 2 Zn(2+) ions per monomer.</text>
</comment>
<comment type="subunit">
    <text evidence="1">Homodimer.</text>
</comment>
<comment type="subcellular location">
    <subcellularLocation>
        <location evidence="1">Cytoplasm</location>
    </subcellularLocation>
</comment>
<comment type="domain">
    <text evidence="1">The J domain is necessary and sufficient to stimulate DnaK ATPase activity. Zinc center 1 plays an important role in the autonomous, DnaK-independent chaperone activity of DnaJ. Zinc center 2 is essential for interaction with DnaK and for DnaJ activity.</text>
</comment>
<comment type="similarity">
    <text evidence="1">Belongs to the DnaJ family.</text>
</comment>
<evidence type="ECO:0000255" key="1">
    <source>
        <dbReference type="HAMAP-Rule" id="MF_01152"/>
    </source>
</evidence>
<sequence length="379" mass="41253">MSKRDFYEVLGVSRDASERDIKKAYKRLAMKFHPDRNQGDDTAAEKFKEVKVAYEILTDAQKRSAYDQYGHAAFEQGGMGGGGFGGGGADFGDIFGDVFGDIFGGGRRGGQQRAQRGSDLRYNMELTLEEAGRGCDKEIEVPTLVSCDPCEGTGAKKGTSSTTCSTCHGQGQVQMRQGFFAVQQACPTCHGKGKIIKDPCNSCHGEGRVHKTKTLNVKIPSGVDTGDRIRLSGEGEAGEHGAPAGDLYVQVHVKEHNIFERDGNNLYCEVPVSFTMAALGGEVEVPTLDGRVSLKVPLETQTGRMFRMRGKGVKGVRTHSAGDLIVKLIVETPVKLTKRQKELLQEFQESFDGKDAKKHNPKSEGFLSGVKNFFDDLTK</sequence>
<keyword id="KW-0143">Chaperone</keyword>
<keyword id="KW-0963">Cytoplasm</keyword>
<keyword id="KW-0235">DNA replication</keyword>
<keyword id="KW-0479">Metal-binding</keyword>
<keyword id="KW-1185">Reference proteome</keyword>
<keyword id="KW-0677">Repeat</keyword>
<keyword id="KW-0346">Stress response</keyword>
<keyword id="KW-0862">Zinc</keyword>
<keyword id="KW-0863">Zinc-finger</keyword>
<organism>
    <name type="scientific">Aliivibrio fischeri (strain ATCC 700601 / ES114)</name>
    <name type="common">Vibrio fischeri</name>
    <dbReference type="NCBI Taxonomy" id="312309"/>
    <lineage>
        <taxon>Bacteria</taxon>
        <taxon>Pseudomonadati</taxon>
        <taxon>Pseudomonadota</taxon>
        <taxon>Gammaproteobacteria</taxon>
        <taxon>Vibrionales</taxon>
        <taxon>Vibrionaceae</taxon>
        <taxon>Aliivibrio</taxon>
    </lineage>
</organism>
<protein>
    <recommendedName>
        <fullName evidence="1">Chaperone protein DnaJ</fullName>
    </recommendedName>
</protein>